<evidence type="ECO:0000255" key="1">
    <source>
        <dbReference type="HAMAP-Rule" id="MF_00605"/>
    </source>
</evidence>
<sequence length="251" mass="28178">MWIGVISLFPEMFRAITDYGVTGRAVKNGLLNVQCWSPRDFTHDRHRTVDDRPYGGGPGMLMMVQPLQDAIHEAKNKAGEGTKVIYLSPQGRKLDQQGVSELAANPKMILVCGRYEGIDERLIATEIDEEWSMGDYVLSGGELAAMALIDSVSRFIPGVLGHEASSAEDSFARGLLDCPHYTRPEVLAGMEVPSVLLSGNHAEIRRWRLKQSLGRTWLRRPELLESLALTDEQATLLNEFQREYRVRQHDD</sequence>
<gene>
    <name evidence="1" type="primary">trmD</name>
    <name type="ordered locus">SG0548</name>
</gene>
<proteinExistence type="inferred from homology"/>
<protein>
    <recommendedName>
        <fullName evidence="1">tRNA (guanine-N(1)-)-methyltransferase</fullName>
        <ecNumber evidence="1">2.1.1.228</ecNumber>
    </recommendedName>
    <alternativeName>
        <fullName evidence="1">M1G-methyltransferase</fullName>
    </alternativeName>
    <alternativeName>
        <fullName evidence="1">tRNA [GM37] methyltransferase</fullName>
    </alternativeName>
</protein>
<name>TRMD_SODGM</name>
<dbReference type="EC" id="2.1.1.228" evidence="1"/>
<dbReference type="EMBL" id="AP008232">
    <property type="protein sequence ID" value="BAE73823.1"/>
    <property type="molecule type" value="Genomic_DNA"/>
</dbReference>
<dbReference type="RefSeq" id="WP_011410301.1">
    <property type="nucleotide sequence ID" value="NC_007712.1"/>
</dbReference>
<dbReference type="SMR" id="Q2NVK2"/>
<dbReference type="STRING" id="343509.SG0548"/>
<dbReference type="KEGG" id="sgl:SG0548"/>
<dbReference type="eggNOG" id="COG0336">
    <property type="taxonomic scope" value="Bacteria"/>
</dbReference>
<dbReference type="HOGENOM" id="CLU_047363_0_1_6"/>
<dbReference type="OrthoDB" id="9807416at2"/>
<dbReference type="BioCyc" id="SGLO343509:SGP1_RS04825-MONOMER"/>
<dbReference type="Proteomes" id="UP000001932">
    <property type="component" value="Chromosome"/>
</dbReference>
<dbReference type="GO" id="GO:0005829">
    <property type="term" value="C:cytosol"/>
    <property type="evidence" value="ECO:0007669"/>
    <property type="project" value="TreeGrafter"/>
</dbReference>
<dbReference type="GO" id="GO:0052906">
    <property type="term" value="F:tRNA (guanine(37)-N1)-methyltransferase activity"/>
    <property type="evidence" value="ECO:0007669"/>
    <property type="project" value="UniProtKB-UniRule"/>
</dbReference>
<dbReference type="GO" id="GO:0002939">
    <property type="term" value="P:tRNA N1-guanine methylation"/>
    <property type="evidence" value="ECO:0007669"/>
    <property type="project" value="TreeGrafter"/>
</dbReference>
<dbReference type="CDD" id="cd18080">
    <property type="entry name" value="TrmD-like"/>
    <property type="match status" value="1"/>
</dbReference>
<dbReference type="FunFam" id="1.10.1270.20:FF:000001">
    <property type="entry name" value="tRNA (guanine-N(1)-)-methyltransferase"/>
    <property type="match status" value="1"/>
</dbReference>
<dbReference type="FunFam" id="3.40.1280.10:FF:000001">
    <property type="entry name" value="tRNA (guanine-N(1)-)-methyltransferase"/>
    <property type="match status" value="1"/>
</dbReference>
<dbReference type="Gene3D" id="3.40.1280.10">
    <property type="match status" value="1"/>
</dbReference>
<dbReference type="Gene3D" id="1.10.1270.20">
    <property type="entry name" value="tRNA(m1g37)methyltransferase, domain 2"/>
    <property type="match status" value="1"/>
</dbReference>
<dbReference type="HAMAP" id="MF_00605">
    <property type="entry name" value="TrmD"/>
    <property type="match status" value="1"/>
</dbReference>
<dbReference type="InterPro" id="IPR029028">
    <property type="entry name" value="Alpha/beta_knot_MTases"/>
</dbReference>
<dbReference type="InterPro" id="IPR023148">
    <property type="entry name" value="tRNA_m1G_MeTrfase_C_sf"/>
</dbReference>
<dbReference type="InterPro" id="IPR002649">
    <property type="entry name" value="tRNA_m1G_MeTrfase_TrmD"/>
</dbReference>
<dbReference type="InterPro" id="IPR029026">
    <property type="entry name" value="tRNA_m1G_MTases_N"/>
</dbReference>
<dbReference type="InterPro" id="IPR016009">
    <property type="entry name" value="tRNA_MeTrfase_TRMD/TRM10"/>
</dbReference>
<dbReference type="NCBIfam" id="NF000648">
    <property type="entry name" value="PRK00026.1"/>
    <property type="match status" value="1"/>
</dbReference>
<dbReference type="NCBIfam" id="TIGR00088">
    <property type="entry name" value="trmD"/>
    <property type="match status" value="1"/>
</dbReference>
<dbReference type="PANTHER" id="PTHR46417">
    <property type="entry name" value="TRNA (GUANINE-N(1)-)-METHYLTRANSFERASE"/>
    <property type="match status" value="1"/>
</dbReference>
<dbReference type="PANTHER" id="PTHR46417:SF1">
    <property type="entry name" value="TRNA (GUANINE-N(1)-)-METHYLTRANSFERASE"/>
    <property type="match status" value="1"/>
</dbReference>
<dbReference type="Pfam" id="PF01746">
    <property type="entry name" value="tRNA_m1G_MT"/>
    <property type="match status" value="1"/>
</dbReference>
<dbReference type="PIRSF" id="PIRSF000386">
    <property type="entry name" value="tRNA_mtase"/>
    <property type="match status" value="1"/>
</dbReference>
<dbReference type="SUPFAM" id="SSF75217">
    <property type="entry name" value="alpha/beta knot"/>
    <property type="match status" value="1"/>
</dbReference>
<keyword id="KW-0963">Cytoplasm</keyword>
<keyword id="KW-0489">Methyltransferase</keyword>
<keyword id="KW-0949">S-adenosyl-L-methionine</keyword>
<keyword id="KW-0808">Transferase</keyword>
<keyword id="KW-0819">tRNA processing</keyword>
<feature type="chain" id="PRO_0000257471" description="tRNA (guanine-N(1)-)-methyltransferase">
    <location>
        <begin position="1"/>
        <end position="251"/>
    </location>
</feature>
<feature type="binding site" evidence="1">
    <location>
        <position position="113"/>
    </location>
    <ligand>
        <name>S-adenosyl-L-methionine</name>
        <dbReference type="ChEBI" id="CHEBI:59789"/>
    </ligand>
</feature>
<feature type="binding site" evidence="1">
    <location>
        <begin position="133"/>
        <end position="138"/>
    </location>
    <ligand>
        <name>S-adenosyl-L-methionine</name>
        <dbReference type="ChEBI" id="CHEBI:59789"/>
    </ligand>
</feature>
<comment type="function">
    <text evidence="1">Specifically methylates guanosine-37 in various tRNAs.</text>
</comment>
<comment type="catalytic activity">
    <reaction evidence="1">
        <text>guanosine(37) in tRNA + S-adenosyl-L-methionine = N(1)-methylguanosine(37) in tRNA + S-adenosyl-L-homocysteine + H(+)</text>
        <dbReference type="Rhea" id="RHEA:36899"/>
        <dbReference type="Rhea" id="RHEA-COMP:10145"/>
        <dbReference type="Rhea" id="RHEA-COMP:10147"/>
        <dbReference type="ChEBI" id="CHEBI:15378"/>
        <dbReference type="ChEBI" id="CHEBI:57856"/>
        <dbReference type="ChEBI" id="CHEBI:59789"/>
        <dbReference type="ChEBI" id="CHEBI:73542"/>
        <dbReference type="ChEBI" id="CHEBI:74269"/>
        <dbReference type="EC" id="2.1.1.228"/>
    </reaction>
</comment>
<comment type="subunit">
    <text evidence="1">Homodimer.</text>
</comment>
<comment type="subcellular location">
    <subcellularLocation>
        <location evidence="1">Cytoplasm</location>
    </subcellularLocation>
</comment>
<comment type="similarity">
    <text evidence="1">Belongs to the RNA methyltransferase TrmD family.</text>
</comment>
<reference key="1">
    <citation type="journal article" date="2006" name="Genome Res.">
        <title>Massive genome erosion and functional adaptations provide insights into the symbiotic lifestyle of Sodalis glossinidius in the tsetse host.</title>
        <authorList>
            <person name="Toh H."/>
            <person name="Weiss B.L."/>
            <person name="Perkin S.A.H."/>
            <person name="Yamashita A."/>
            <person name="Oshima K."/>
            <person name="Hattori M."/>
            <person name="Aksoy S."/>
        </authorList>
    </citation>
    <scope>NUCLEOTIDE SEQUENCE [LARGE SCALE GENOMIC DNA]</scope>
    <source>
        <strain>morsitans</strain>
    </source>
</reference>
<accession>Q2NVK2</accession>
<organism>
    <name type="scientific">Sodalis glossinidius (strain morsitans)</name>
    <dbReference type="NCBI Taxonomy" id="343509"/>
    <lineage>
        <taxon>Bacteria</taxon>
        <taxon>Pseudomonadati</taxon>
        <taxon>Pseudomonadota</taxon>
        <taxon>Gammaproteobacteria</taxon>
        <taxon>Enterobacterales</taxon>
        <taxon>Bruguierivoracaceae</taxon>
        <taxon>Sodalis</taxon>
    </lineage>
</organism>